<accession>Q8TH84</accession>
<gene>
    <name evidence="1" type="primary">kptA</name>
    <name type="ordered locus">MA_4638</name>
</gene>
<organism>
    <name type="scientific">Methanosarcina acetivorans (strain ATCC 35395 / DSM 2834 / JCM 12185 / C2A)</name>
    <dbReference type="NCBI Taxonomy" id="188937"/>
    <lineage>
        <taxon>Archaea</taxon>
        <taxon>Methanobacteriati</taxon>
        <taxon>Methanobacteriota</taxon>
        <taxon>Stenosarchaea group</taxon>
        <taxon>Methanomicrobia</taxon>
        <taxon>Methanosarcinales</taxon>
        <taxon>Methanosarcinaceae</taxon>
        <taxon>Methanosarcina</taxon>
    </lineage>
</organism>
<sequence length="207" mass="24023">MIRKCTEHGYFRGGSCQQCKRPGRYVLDDSREEKLGRFVSGTLRHFPASAGVKMDEYGWVDLNAFCDVMKKRYNWMRKEYLYALVESDEKGRYQIRGFMIRARYGHSVNIELDYEESDAPYVYYGASPEEVDVLLENGIFPIKQRYVHLSTSYEKAAEVALIHTESPVILQVDAFRAQEDGISLKLATDYIVLAEKIPPEYLYVIEE</sequence>
<dbReference type="EC" id="2.7.1.-" evidence="1"/>
<dbReference type="EMBL" id="AE010299">
    <property type="protein sequence ID" value="AAM07972.1"/>
    <property type="molecule type" value="Genomic_DNA"/>
</dbReference>
<dbReference type="RefSeq" id="WP_011024506.1">
    <property type="nucleotide sequence ID" value="NC_003552.1"/>
</dbReference>
<dbReference type="SMR" id="Q8TH84"/>
<dbReference type="STRING" id="188937.MA_4638"/>
<dbReference type="EnsemblBacteria" id="AAM07972">
    <property type="protein sequence ID" value="AAM07972"/>
    <property type="gene ID" value="MA_4638"/>
</dbReference>
<dbReference type="GeneID" id="1476532"/>
<dbReference type="KEGG" id="mac:MA_4638"/>
<dbReference type="HOGENOM" id="CLU_052998_4_1_2"/>
<dbReference type="InParanoid" id="Q8TH84"/>
<dbReference type="OrthoDB" id="24376at2157"/>
<dbReference type="PhylomeDB" id="Q8TH84"/>
<dbReference type="Proteomes" id="UP000002487">
    <property type="component" value="Chromosome"/>
</dbReference>
<dbReference type="GO" id="GO:0003950">
    <property type="term" value="F:NAD+ poly-ADP-ribosyltransferase activity"/>
    <property type="evidence" value="ECO:0007669"/>
    <property type="project" value="InterPro"/>
</dbReference>
<dbReference type="GO" id="GO:0000215">
    <property type="term" value="F:tRNA 2'-phosphotransferase activity"/>
    <property type="evidence" value="ECO:0000318"/>
    <property type="project" value="GO_Central"/>
</dbReference>
<dbReference type="GO" id="GO:0006388">
    <property type="term" value="P:tRNA splicing, via endonucleolytic cleavage and ligation"/>
    <property type="evidence" value="ECO:0000318"/>
    <property type="project" value="GO_Central"/>
</dbReference>
<dbReference type="Gene3D" id="3.20.170.30">
    <property type="match status" value="1"/>
</dbReference>
<dbReference type="Gene3D" id="1.10.10.970">
    <property type="entry name" value="RNA 2'-phosphotransferase, Tpt1/KptA family, N-terminal domain"/>
    <property type="match status" value="1"/>
</dbReference>
<dbReference type="HAMAP" id="MF_00299">
    <property type="entry name" value="KptA"/>
    <property type="match status" value="1"/>
</dbReference>
<dbReference type="InterPro" id="IPR002745">
    <property type="entry name" value="Ptrans_KptA/Tpt1"/>
</dbReference>
<dbReference type="InterPro" id="IPR042081">
    <property type="entry name" value="RNA_2'-PTrans_C"/>
</dbReference>
<dbReference type="InterPro" id="IPR022928">
    <property type="entry name" value="RNA_2'-PTrans_KptA"/>
</dbReference>
<dbReference type="InterPro" id="IPR042080">
    <property type="entry name" value="RNA_2'-PTrans_N"/>
</dbReference>
<dbReference type="NCBIfam" id="NF002015">
    <property type="entry name" value="PRK00819.1-5"/>
    <property type="match status" value="1"/>
</dbReference>
<dbReference type="PANTHER" id="PTHR12684">
    <property type="entry name" value="PUTATIVE PHOSPHOTRANSFERASE"/>
    <property type="match status" value="1"/>
</dbReference>
<dbReference type="PANTHER" id="PTHR12684:SF2">
    <property type="entry name" value="TRNA 2'-PHOSPHOTRANSFERASE 1"/>
    <property type="match status" value="1"/>
</dbReference>
<dbReference type="Pfam" id="PF01885">
    <property type="entry name" value="PTS_2-RNA"/>
    <property type="match status" value="1"/>
</dbReference>
<dbReference type="SUPFAM" id="SSF56399">
    <property type="entry name" value="ADP-ribosylation"/>
    <property type="match status" value="1"/>
</dbReference>
<proteinExistence type="inferred from homology"/>
<comment type="function">
    <text evidence="1">Removes the 2'-phosphate from RNA via an intermediate in which the phosphate is ADP-ribosylated by NAD followed by a presumed transesterification to release the RNA and generate ADP-ribose 1''-2''-cyclic phosphate (APPR&gt;P). May function as an ADP-ribosylase.</text>
</comment>
<comment type="similarity">
    <text evidence="1">Belongs to the KptA/TPT1 family.</text>
</comment>
<protein>
    <recommendedName>
        <fullName evidence="1">Probable RNA 2'-phosphotransferase</fullName>
        <ecNumber evidence="1">2.7.1.-</ecNumber>
    </recommendedName>
</protein>
<name>KPTA_METAC</name>
<reference key="1">
    <citation type="journal article" date="2002" name="Genome Res.">
        <title>The genome of Methanosarcina acetivorans reveals extensive metabolic and physiological diversity.</title>
        <authorList>
            <person name="Galagan J.E."/>
            <person name="Nusbaum C."/>
            <person name="Roy A."/>
            <person name="Endrizzi M.G."/>
            <person name="Macdonald P."/>
            <person name="FitzHugh W."/>
            <person name="Calvo S."/>
            <person name="Engels R."/>
            <person name="Smirnov S."/>
            <person name="Atnoor D."/>
            <person name="Brown A."/>
            <person name="Allen N."/>
            <person name="Naylor J."/>
            <person name="Stange-Thomann N."/>
            <person name="DeArellano K."/>
            <person name="Johnson R."/>
            <person name="Linton L."/>
            <person name="McEwan P."/>
            <person name="McKernan K."/>
            <person name="Talamas J."/>
            <person name="Tirrell A."/>
            <person name="Ye W."/>
            <person name="Zimmer A."/>
            <person name="Barber R.D."/>
            <person name="Cann I."/>
            <person name="Graham D.E."/>
            <person name="Grahame D.A."/>
            <person name="Guss A.M."/>
            <person name="Hedderich R."/>
            <person name="Ingram-Smith C."/>
            <person name="Kuettner H.C."/>
            <person name="Krzycki J.A."/>
            <person name="Leigh J.A."/>
            <person name="Li W."/>
            <person name="Liu J."/>
            <person name="Mukhopadhyay B."/>
            <person name="Reeve J.N."/>
            <person name="Smith K."/>
            <person name="Springer T.A."/>
            <person name="Umayam L.A."/>
            <person name="White O."/>
            <person name="White R.H."/>
            <person name="de Macario E.C."/>
            <person name="Ferry J.G."/>
            <person name="Jarrell K.F."/>
            <person name="Jing H."/>
            <person name="Macario A.J.L."/>
            <person name="Paulsen I.T."/>
            <person name="Pritchett M."/>
            <person name="Sowers K.R."/>
            <person name="Swanson R.V."/>
            <person name="Zinder S.H."/>
            <person name="Lander E."/>
            <person name="Metcalf W.W."/>
            <person name="Birren B."/>
        </authorList>
    </citation>
    <scope>NUCLEOTIDE SEQUENCE [LARGE SCALE GENOMIC DNA]</scope>
    <source>
        <strain>ATCC 35395 / DSM 2834 / JCM 12185 / C2A</strain>
    </source>
</reference>
<keyword id="KW-0520">NAD</keyword>
<keyword id="KW-1185">Reference proteome</keyword>
<keyword id="KW-0808">Transferase</keyword>
<evidence type="ECO:0000255" key="1">
    <source>
        <dbReference type="HAMAP-Rule" id="MF_00299"/>
    </source>
</evidence>
<feature type="chain" id="PRO_0000157487" description="Probable RNA 2'-phosphotransferase">
    <location>
        <begin position="1"/>
        <end position="207"/>
    </location>
</feature>